<gene>
    <name type="primary">RpL17</name>
</gene>
<evidence type="ECO:0000256" key="1">
    <source>
        <dbReference type="SAM" id="MobiDB-lite"/>
    </source>
</evidence>
<evidence type="ECO:0000305" key="2"/>
<proteinExistence type="evidence at transcript level"/>
<protein>
    <recommendedName>
        <fullName evidence="2">Large ribosomal subunit protein uL22</fullName>
    </recommendedName>
    <alternativeName>
        <fullName>60S ribosomal protein L17</fullName>
    </alternativeName>
</protein>
<keyword id="KW-1185">Reference proteome</keyword>
<keyword id="KW-0687">Ribonucleoprotein</keyword>
<keyword id="KW-0689">Ribosomal protein</keyword>
<reference key="1">
    <citation type="journal article" date="2006" name="Insect Biochem. Mol. Biol.">
        <title>An annotated catalog of salivary gland transcripts from Ixodes scapularis ticks.</title>
        <authorList>
            <person name="Ribeiro J.M.C."/>
            <person name="Alarcon-Chaidez F."/>
            <person name="Francischetti I.M.B."/>
            <person name="Mans B.J."/>
            <person name="Mather T.N."/>
            <person name="Valenzuela J.G."/>
            <person name="Wikel S.K."/>
        </authorList>
    </citation>
    <scope>NUCLEOTIDE SEQUENCE [LARGE SCALE MRNA]</scope>
    <source>
        <strain>Is-all-clu554</strain>
        <tissue>Salivary gland</tissue>
    </source>
</reference>
<accession>Q4PM54</accession>
<dbReference type="EMBL" id="DQ066273">
    <property type="protein sequence ID" value="AAY66910.1"/>
    <property type="molecule type" value="mRNA"/>
</dbReference>
<dbReference type="SMR" id="Q4PM54"/>
<dbReference type="FunCoup" id="Q4PM54">
    <property type="interactions" value="625"/>
</dbReference>
<dbReference type="EnsemblMetazoa" id="ISCI005425-RA">
    <property type="protein sequence ID" value="ISCI005425-PA"/>
    <property type="gene ID" value="ISCI005425"/>
</dbReference>
<dbReference type="EnsemblMetazoa" id="XM_029973111.4">
    <property type="protein sequence ID" value="XP_029828971.1"/>
    <property type="gene ID" value="LOC8051905"/>
</dbReference>
<dbReference type="VEuPathDB" id="VectorBase:ISCI005425"/>
<dbReference type="VEuPathDB" id="VectorBase:ISCP_021983"/>
<dbReference type="VEuPathDB" id="VectorBase:ISCW005425"/>
<dbReference type="HOGENOM" id="CLU_083987_0_1_1"/>
<dbReference type="InParanoid" id="Q4PM54"/>
<dbReference type="OMA" id="QVNHAPC"/>
<dbReference type="OrthoDB" id="10254664at2759"/>
<dbReference type="Proteomes" id="UP000001555">
    <property type="component" value="Unplaced"/>
</dbReference>
<dbReference type="GO" id="GO:0022625">
    <property type="term" value="C:cytosolic large ribosomal subunit"/>
    <property type="evidence" value="ECO:0000318"/>
    <property type="project" value="GO_Central"/>
</dbReference>
<dbReference type="GO" id="GO:0003735">
    <property type="term" value="F:structural constituent of ribosome"/>
    <property type="evidence" value="ECO:0000318"/>
    <property type="project" value="GO_Central"/>
</dbReference>
<dbReference type="GO" id="GO:0002181">
    <property type="term" value="P:cytoplasmic translation"/>
    <property type="evidence" value="ECO:0000318"/>
    <property type="project" value="GO_Central"/>
</dbReference>
<dbReference type="CDD" id="cd00336">
    <property type="entry name" value="Ribosomal_L22"/>
    <property type="match status" value="1"/>
</dbReference>
<dbReference type="FunFam" id="3.90.470.10:FF:000003">
    <property type="entry name" value="60S ribosomal protein L17"/>
    <property type="match status" value="1"/>
</dbReference>
<dbReference type="Gene3D" id="3.90.470.10">
    <property type="entry name" value="Ribosomal protein L22/L17"/>
    <property type="match status" value="1"/>
</dbReference>
<dbReference type="HAMAP" id="MF_01331_A">
    <property type="entry name" value="Ribosomal_uL22_A"/>
    <property type="match status" value="1"/>
</dbReference>
<dbReference type="InterPro" id="IPR001063">
    <property type="entry name" value="Ribosomal_uL22"/>
</dbReference>
<dbReference type="InterPro" id="IPR018260">
    <property type="entry name" value="Ribosomal_uL22_CS"/>
</dbReference>
<dbReference type="InterPro" id="IPR005721">
    <property type="entry name" value="Ribosomal_uL22_euk/arc"/>
</dbReference>
<dbReference type="InterPro" id="IPR036394">
    <property type="entry name" value="Ribosomal_uL22_sf"/>
</dbReference>
<dbReference type="NCBIfam" id="NF003260">
    <property type="entry name" value="PRK04223.1"/>
    <property type="match status" value="1"/>
</dbReference>
<dbReference type="NCBIfam" id="TIGR01038">
    <property type="entry name" value="uL22_arch_euk"/>
    <property type="match status" value="1"/>
</dbReference>
<dbReference type="PANTHER" id="PTHR11593">
    <property type="entry name" value="60S RIBOSOMAL PROTEIN L17"/>
    <property type="match status" value="1"/>
</dbReference>
<dbReference type="PANTHER" id="PTHR11593:SF10">
    <property type="entry name" value="60S RIBOSOMAL PROTEIN L17"/>
    <property type="match status" value="1"/>
</dbReference>
<dbReference type="Pfam" id="PF00237">
    <property type="entry name" value="Ribosomal_L22"/>
    <property type="match status" value="1"/>
</dbReference>
<dbReference type="SUPFAM" id="SSF54843">
    <property type="entry name" value="Ribosomal protein L22"/>
    <property type="match status" value="1"/>
</dbReference>
<dbReference type="PROSITE" id="PS00464">
    <property type="entry name" value="RIBOSOMAL_L22"/>
    <property type="match status" value="1"/>
</dbReference>
<feature type="chain" id="PRO_0000323415" description="Large ribosomal subunit protein uL22">
    <location>
        <begin position="1"/>
        <end position="185"/>
    </location>
</feature>
<feature type="region of interest" description="Disordered" evidence="1">
    <location>
        <begin position="157"/>
        <end position="185"/>
    </location>
</feature>
<feature type="compositionally biased region" description="Basic residues" evidence="1">
    <location>
        <begin position="169"/>
        <end position="178"/>
    </location>
</feature>
<sequence length="185" mass="21343">MGRYSVEPDNATKSCKARGSNLRVHFKNTRETAQAIKHMALRRAQRYLKNVIAKKEIVPFRRFNGGVGRKAQAKAFGCTQGRWPKKSAEFLWQLLRNAESNADYKGLDVDRLVIDHIQVNRAPKMRRRTYRAHGRINPYMSSPCHIEVILSEKEQVVAAPSPEEDAPKKKQSKKKMARQKLMQRD</sequence>
<comment type="similarity">
    <text evidence="2">Belongs to the universal ribosomal protein uL22 family.</text>
</comment>
<organism>
    <name type="scientific">Ixodes scapularis</name>
    <name type="common">Black-legged tick</name>
    <name type="synonym">Deer tick</name>
    <dbReference type="NCBI Taxonomy" id="6945"/>
    <lineage>
        <taxon>Eukaryota</taxon>
        <taxon>Metazoa</taxon>
        <taxon>Ecdysozoa</taxon>
        <taxon>Arthropoda</taxon>
        <taxon>Chelicerata</taxon>
        <taxon>Arachnida</taxon>
        <taxon>Acari</taxon>
        <taxon>Parasitiformes</taxon>
        <taxon>Ixodida</taxon>
        <taxon>Ixodoidea</taxon>
        <taxon>Ixodidae</taxon>
        <taxon>Ixodinae</taxon>
        <taxon>Ixodes</taxon>
    </lineage>
</organism>
<name>RL17_IXOSC</name>